<name>NCAP_ARV</name>
<sequence length="429" mass="49533">MFCTINQKAVQPAKPSDTTTPQYPADFFNKNNHQKPTVRVTQRGYKIQELREIISNGIVQDDLNSHHVVRYMELIMEDITDTLDEDWNSFGVKIGRKGDKITPLSLVNVMIEEDELIDGKRNNGVNKKDDKWIMLVITSYYRFAFSQNQNHRSNLITKLNLQLRTFLKDPPTIVDNMGLFTSLISNINFTKLISALDMFLNRFKNNDWSYLRFGTIASRYKDCSALMSLSHVCDVTGMKMEEFMDWIFVYSTGEDMIKLMKEGNEIDNPMSYMPYTMSMGLSTKSPYSSINCPSIYSFIHMLGSFLGSERSRNARMVSENNIVNLKVNAGVVSYVKSHRASMIKAFISNDVKEQWYNNDDNDNENGGDDESDEELDEMPKGDNPVEWFMYLESRHFELPEEIKNFMNREARKITNPRVGTIGKFVSTMN</sequence>
<feature type="chain" id="PRO_0000297607" description="Nucleoprotein">
    <location>
        <begin position="1"/>
        <end position="429"/>
    </location>
</feature>
<feature type="region of interest" description="Disordered" evidence="2">
    <location>
        <begin position="355"/>
        <end position="378"/>
    </location>
</feature>
<feature type="compositionally biased region" description="Acidic residues" evidence="2">
    <location>
        <begin position="359"/>
        <end position="376"/>
    </location>
</feature>
<organism>
    <name type="scientific">Adelaide River virus</name>
    <name type="common">ARV</name>
    <dbReference type="NCBI Taxonomy" id="31612"/>
    <lineage>
        <taxon>Viruses</taxon>
        <taxon>Riboviria</taxon>
        <taxon>Orthornavirae</taxon>
        <taxon>Negarnaviricota</taxon>
        <taxon>Haploviricotina</taxon>
        <taxon>Monjiviricetes</taxon>
        <taxon>Mononegavirales</taxon>
        <taxon>Rhabdoviridae</taxon>
        <taxon>Alpharhabdovirinae</taxon>
        <taxon>Ephemerovirus</taxon>
        <taxon>Ephemerovirus adelaide</taxon>
    </lineage>
</organism>
<proteinExistence type="inferred from homology"/>
<keyword id="KW-0167">Capsid protein</keyword>
<keyword id="KW-1139">Helical capsid protein</keyword>
<keyword id="KW-1035">Host cytoplasm</keyword>
<keyword id="KW-0597">Phosphoprotein</keyword>
<keyword id="KW-0687">Ribonucleoprotein</keyword>
<keyword id="KW-0694">RNA-binding</keyword>
<keyword id="KW-0543">Viral nucleoprotein</keyword>
<keyword id="KW-0946">Virion</keyword>
<evidence type="ECO:0000250" key="1"/>
<evidence type="ECO:0000256" key="2">
    <source>
        <dbReference type="SAM" id="MobiDB-lite"/>
    </source>
</evidence>
<evidence type="ECO:0000305" key="3"/>
<organismHost>
    <name type="scientific">Bos taurus</name>
    <name type="common">Bovine</name>
    <dbReference type="NCBI Taxonomy" id="9913"/>
</organismHost>
<organismHost>
    <name type="scientific">Bubalus bubalis</name>
    <name type="common">Domestic water buffalo</name>
    <dbReference type="NCBI Taxonomy" id="89462"/>
</organismHost>
<organismHost>
    <name type="scientific">Culicoides</name>
    <dbReference type="NCBI Taxonomy" id="58271"/>
</organismHost>
<organismHost>
    <name type="scientific">Syncerus caffer</name>
    <name type="common">African buffalo</name>
    <dbReference type="NCBI Taxonomy" id="9970"/>
</organismHost>
<comment type="function">
    <text evidence="1">Encapsidates the genome, protecting it from nucleases. If expressed without protein P it binds non-specifically RNA and therefore can bind it's own mRNA. Interaction with protein P abolishes any non-specific RNA binding, and prevents phosphorylation. The soluble N-P complex encapsidates specifically the genomic RNA, with protein N protecting the genome like a pearl necklace. The encapsidated genomic RNA is termed the nucleocapsid (NC) and serves as template for viral transcription and replication. Protein N binds protein P in the NC through a different interaction, and can be phosphorylated. Subsequent viral replication is dependent on intracellular concentration of newly synthesized protein N. During replication, encapsidation by protein N is coupled to RNA synthesis and all replicative products are resistant to nucleases (By similarity).</text>
</comment>
<comment type="subunit">
    <text evidence="1">Homomultimerizes to form the nucleocapsid. Binds to viral genomic RNA (By similarity).</text>
</comment>
<comment type="subcellular location">
    <subcellularLocation>
        <location>Virion</location>
    </subcellularLocation>
    <subcellularLocation>
        <location evidence="1">Host cytoplasm</location>
    </subcellularLocation>
</comment>
<comment type="similarity">
    <text evidence="3">Belongs to the ephemerovirus nucleocapsid protein family.</text>
</comment>
<gene>
    <name type="primary">N</name>
</gene>
<reference key="1">
    <citation type="journal article" date="1995" name="J. Gen. Virol.">
        <title>Adelaide River virus nucleoprotein gene: analysis of phylogenetic relationships of ephemeroviruses and other rhabdoviruses.</title>
        <authorList>
            <person name="Wang Y."/>
            <person name="Cowley J.A."/>
            <person name="Walker P.J."/>
        </authorList>
    </citation>
    <scope>NUCLEOTIDE SEQUENCE [GENOMIC RNA]</scope>
    <source>
        <strain>DPP61</strain>
    </source>
</reference>
<accession>Q65111</accession>
<protein>
    <recommendedName>
        <fullName>Nucleoprotein</fullName>
        <shortName>NP</shortName>
    </recommendedName>
    <alternativeName>
        <fullName>Nucleocapsid protein</fullName>
        <shortName>Protein N</shortName>
    </alternativeName>
</protein>
<dbReference type="EMBL" id="U10363">
    <property type="protein sequence ID" value="AAC54627.1"/>
    <property type="molecule type" value="Genomic_RNA"/>
</dbReference>
<dbReference type="RefSeq" id="YP_009177239.1">
    <property type="nucleotide sequence ID" value="NC_028246.1"/>
</dbReference>
<dbReference type="SMR" id="Q65111"/>
<dbReference type="GeneID" id="26123217"/>
<dbReference type="KEGG" id="vg:26123217"/>
<dbReference type="OrthoDB" id="22890at10239"/>
<dbReference type="GO" id="GO:0019029">
    <property type="term" value="C:helical viral capsid"/>
    <property type="evidence" value="ECO:0007669"/>
    <property type="project" value="UniProtKB-KW"/>
</dbReference>
<dbReference type="GO" id="GO:0030430">
    <property type="term" value="C:host cell cytoplasm"/>
    <property type="evidence" value="ECO:0007669"/>
    <property type="project" value="UniProtKB-SubCell"/>
</dbReference>
<dbReference type="GO" id="GO:1990904">
    <property type="term" value="C:ribonucleoprotein complex"/>
    <property type="evidence" value="ECO:0007669"/>
    <property type="project" value="UniProtKB-KW"/>
</dbReference>
<dbReference type="GO" id="GO:0019013">
    <property type="term" value="C:viral nucleocapsid"/>
    <property type="evidence" value="ECO:0007669"/>
    <property type="project" value="UniProtKB-KW"/>
</dbReference>
<dbReference type="GO" id="GO:0003723">
    <property type="term" value="F:RNA binding"/>
    <property type="evidence" value="ECO:0007669"/>
    <property type="project" value="UniProtKB-KW"/>
</dbReference>
<dbReference type="Gene3D" id="1.10.3610.10">
    <property type="entry name" value="Nucleoprotein"/>
    <property type="match status" value="1"/>
</dbReference>
<dbReference type="Gene3D" id="1.10.3570.10">
    <property type="entry name" value="Rhabdovirus nucleocapsid protein like domain"/>
    <property type="match status" value="1"/>
</dbReference>
<dbReference type="InterPro" id="IPR000448">
    <property type="entry name" value="Rhabdo_ncapsid"/>
</dbReference>
<dbReference type="InterPro" id="IPR023331">
    <property type="entry name" value="Rhabdovirus_ncapsid_C"/>
</dbReference>
<dbReference type="InterPro" id="IPR023330">
    <property type="entry name" value="Rhabdovirus_ncapsid_N"/>
</dbReference>
<dbReference type="InterPro" id="IPR035961">
    <property type="entry name" value="Rhabdovirus_nucleoprotein-like"/>
</dbReference>
<dbReference type="Pfam" id="PF00945">
    <property type="entry name" value="Rhabdo_ncap"/>
    <property type="match status" value="1"/>
</dbReference>
<dbReference type="SUPFAM" id="SSF140809">
    <property type="entry name" value="Rhabdovirus nucleoprotein-like"/>
    <property type="match status" value="1"/>
</dbReference>